<organism>
    <name type="scientific">Staphylococcus aureus (strain JH9)</name>
    <dbReference type="NCBI Taxonomy" id="359786"/>
    <lineage>
        <taxon>Bacteria</taxon>
        <taxon>Bacillati</taxon>
        <taxon>Bacillota</taxon>
        <taxon>Bacilli</taxon>
        <taxon>Bacillales</taxon>
        <taxon>Staphylococcaceae</taxon>
        <taxon>Staphylococcus</taxon>
    </lineage>
</organism>
<keyword id="KW-0963">Cytoplasm</keyword>
<keyword id="KW-0342">GTP-binding</keyword>
<keyword id="KW-0378">Hydrolase</keyword>
<keyword id="KW-0460">Magnesium</keyword>
<keyword id="KW-0479">Metal-binding</keyword>
<keyword id="KW-0547">Nucleotide-binding</keyword>
<keyword id="KW-0630">Potassium</keyword>
<keyword id="KW-0819">tRNA processing</keyword>
<proteinExistence type="inferred from homology"/>
<dbReference type="EC" id="3.6.-.-" evidence="1"/>
<dbReference type="EMBL" id="CP000703">
    <property type="protein sequence ID" value="ABQ50510.1"/>
    <property type="molecule type" value="Genomic_DNA"/>
</dbReference>
<dbReference type="RefSeq" id="WP_000362509.1">
    <property type="nucleotide sequence ID" value="NC_009487.1"/>
</dbReference>
<dbReference type="SMR" id="A5IWD7"/>
<dbReference type="KEGG" id="saj:SaurJH9_2734"/>
<dbReference type="HOGENOM" id="CLU_019624_4_1_9"/>
<dbReference type="GO" id="GO:0005829">
    <property type="term" value="C:cytosol"/>
    <property type="evidence" value="ECO:0007669"/>
    <property type="project" value="TreeGrafter"/>
</dbReference>
<dbReference type="GO" id="GO:0005525">
    <property type="term" value="F:GTP binding"/>
    <property type="evidence" value="ECO:0007669"/>
    <property type="project" value="UniProtKB-UniRule"/>
</dbReference>
<dbReference type="GO" id="GO:0003924">
    <property type="term" value="F:GTPase activity"/>
    <property type="evidence" value="ECO:0007669"/>
    <property type="project" value="UniProtKB-UniRule"/>
</dbReference>
<dbReference type="GO" id="GO:0046872">
    <property type="term" value="F:metal ion binding"/>
    <property type="evidence" value="ECO:0007669"/>
    <property type="project" value="UniProtKB-KW"/>
</dbReference>
<dbReference type="GO" id="GO:0030488">
    <property type="term" value="P:tRNA methylation"/>
    <property type="evidence" value="ECO:0007669"/>
    <property type="project" value="TreeGrafter"/>
</dbReference>
<dbReference type="GO" id="GO:0002098">
    <property type="term" value="P:tRNA wobble uridine modification"/>
    <property type="evidence" value="ECO:0007669"/>
    <property type="project" value="TreeGrafter"/>
</dbReference>
<dbReference type="CDD" id="cd04164">
    <property type="entry name" value="trmE"/>
    <property type="match status" value="1"/>
</dbReference>
<dbReference type="CDD" id="cd14858">
    <property type="entry name" value="TrmE_N"/>
    <property type="match status" value="1"/>
</dbReference>
<dbReference type="FunFam" id="3.30.1360.120:FF:000003">
    <property type="entry name" value="tRNA modification GTPase MnmE"/>
    <property type="match status" value="1"/>
</dbReference>
<dbReference type="FunFam" id="3.40.50.300:FF:000494">
    <property type="entry name" value="tRNA modification GTPase MnmE"/>
    <property type="match status" value="1"/>
</dbReference>
<dbReference type="Gene3D" id="3.40.50.300">
    <property type="entry name" value="P-loop containing nucleotide triphosphate hydrolases"/>
    <property type="match status" value="1"/>
</dbReference>
<dbReference type="Gene3D" id="3.30.1360.120">
    <property type="entry name" value="Probable tRNA modification gtpase trme, domain 1"/>
    <property type="match status" value="1"/>
</dbReference>
<dbReference type="Gene3D" id="1.20.120.430">
    <property type="entry name" value="tRNA modification GTPase MnmE domain 2"/>
    <property type="match status" value="1"/>
</dbReference>
<dbReference type="HAMAP" id="MF_00379">
    <property type="entry name" value="GTPase_MnmE"/>
    <property type="match status" value="1"/>
</dbReference>
<dbReference type="InterPro" id="IPR031168">
    <property type="entry name" value="G_TrmE"/>
</dbReference>
<dbReference type="InterPro" id="IPR006073">
    <property type="entry name" value="GTP-bd"/>
</dbReference>
<dbReference type="InterPro" id="IPR018948">
    <property type="entry name" value="GTP-bd_TrmE_N"/>
</dbReference>
<dbReference type="InterPro" id="IPR004520">
    <property type="entry name" value="GTPase_MnmE"/>
</dbReference>
<dbReference type="InterPro" id="IPR027368">
    <property type="entry name" value="MnmE_dom2"/>
</dbReference>
<dbReference type="InterPro" id="IPR025867">
    <property type="entry name" value="MnmE_helical"/>
</dbReference>
<dbReference type="InterPro" id="IPR027417">
    <property type="entry name" value="P-loop_NTPase"/>
</dbReference>
<dbReference type="InterPro" id="IPR005225">
    <property type="entry name" value="Small_GTP-bd"/>
</dbReference>
<dbReference type="InterPro" id="IPR027266">
    <property type="entry name" value="TrmE/GcvT_dom1"/>
</dbReference>
<dbReference type="NCBIfam" id="TIGR00450">
    <property type="entry name" value="mnmE_trmE_thdF"/>
    <property type="match status" value="1"/>
</dbReference>
<dbReference type="NCBIfam" id="NF003661">
    <property type="entry name" value="PRK05291.1-3"/>
    <property type="match status" value="1"/>
</dbReference>
<dbReference type="NCBIfam" id="TIGR00231">
    <property type="entry name" value="small_GTP"/>
    <property type="match status" value="1"/>
</dbReference>
<dbReference type="PANTHER" id="PTHR42714">
    <property type="entry name" value="TRNA MODIFICATION GTPASE GTPBP3"/>
    <property type="match status" value="1"/>
</dbReference>
<dbReference type="PANTHER" id="PTHR42714:SF2">
    <property type="entry name" value="TRNA MODIFICATION GTPASE GTPBP3, MITOCHONDRIAL"/>
    <property type="match status" value="1"/>
</dbReference>
<dbReference type="Pfam" id="PF01926">
    <property type="entry name" value="MMR_HSR1"/>
    <property type="match status" value="1"/>
</dbReference>
<dbReference type="Pfam" id="PF12631">
    <property type="entry name" value="MnmE_helical"/>
    <property type="match status" value="1"/>
</dbReference>
<dbReference type="Pfam" id="PF10396">
    <property type="entry name" value="TrmE_N"/>
    <property type="match status" value="1"/>
</dbReference>
<dbReference type="PRINTS" id="PR00449">
    <property type="entry name" value="RASTRNSFRMNG"/>
</dbReference>
<dbReference type="SUPFAM" id="SSF52540">
    <property type="entry name" value="P-loop containing nucleoside triphosphate hydrolases"/>
    <property type="match status" value="1"/>
</dbReference>
<dbReference type="SUPFAM" id="SSF116878">
    <property type="entry name" value="TrmE connector domain"/>
    <property type="match status" value="1"/>
</dbReference>
<dbReference type="PROSITE" id="PS51709">
    <property type="entry name" value="G_TRME"/>
    <property type="match status" value="1"/>
</dbReference>
<sequence>MDLDTITSISTPMGEGAIGIVRLSGPQAVEIADKLYKGKHLLNDVPSHTINYGHIIDPESKEVVEEVMVSVLRAPKTFTREDIIEINCHGGILTINRVLELTMTYGARMAEPGEFTKRAFLNGRIDLSQAEAVMDFIRSKTDRASKVAMNQIEGRLSDLIKKQRQSILEILAQVEVNIDYPEYDDVEDATTEFLLEQSKEIKQEINRLLDTGAQGKIMREGLSTVIVGKPNVGKSSMLNNLIQDNKAIVTEVAGTTRDVLEEYVNVRGVPLRLVDTAGIRETEDIVEKIGVERSRKALSQADLILFVLNNNEALTQEDYTLYEVVKNEDVIVIVNKMDLEQNIDINEVKDMIGDTPLIQTSMLKQEGIDELEIQIRDLFFGGEVQNQDMTYVSNSRHISLLKQARQTIQDAIDAAESGVPMDMVQIDLTRTWEILGEIIGETASDELIDQLFSQFCLGK</sequence>
<gene>
    <name evidence="1" type="primary">mnmE</name>
    <name evidence="1" type="synonym">trmE</name>
    <name type="ordered locus">SaurJH9_2734</name>
</gene>
<accession>A5IWD7</accession>
<comment type="function">
    <text evidence="1">Exhibits a very high intrinsic GTPase hydrolysis rate. Involved in the addition of a carboxymethylaminomethyl (cmnm) group at the wobble position (U34) of certain tRNAs, forming tRNA-cmnm(5)s(2)U34.</text>
</comment>
<comment type="cofactor">
    <cofactor evidence="1">
        <name>K(+)</name>
        <dbReference type="ChEBI" id="CHEBI:29103"/>
    </cofactor>
    <text evidence="1">Binds 1 potassium ion per subunit.</text>
</comment>
<comment type="subunit">
    <text evidence="1">Homodimer. Heterotetramer of two MnmE and two MnmG subunits.</text>
</comment>
<comment type="subcellular location">
    <subcellularLocation>
        <location evidence="1">Cytoplasm</location>
    </subcellularLocation>
</comment>
<comment type="similarity">
    <text evidence="1">Belongs to the TRAFAC class TrmE-Era-EngA-EngB-Septin-like GTPase superfamily. TrmE GTPase family.</text>
</comment>
<feature type="chain" id="PRO_1000080018" description="tRNA modification GTPase MnmE">
    <location>
        <begin position="1"/>
        <end position="459"/>
    </location>
</feature>
<feature type="domain" description="TrmE-type G">
    <location>
        <begin position="221"/>
        <end position="380"/>
    </location>
</feature>
<feature type="binding site" evidence="1">
    <location>
        <position position="22"/>
    </location>
    <ligand>
        <name>(6S)-5-formyl-5,6,7,8-tetrahydrofolate</name>
        <dbReference type="ChEBI" id="CHEBI:57457"/>
    </ligand>
</feature>
<feature type="binding site" evidence="1">
    <location>
        <position position="85"/>
    </location>
    <ligand>
        <name>(6S)-5-formyl-5,6,7,8-tetrahydrofolate</name>
        <dbReference type="ChEBI" id="CHEBI:57457"/>
    </ligand>
</feature>
<feature type="binding site" evidence="1">
    <location>
        <position position="124"/>
    </location>
    <ligand>
        <name>(6S)-5-formyl-5,6,7,8-tetrahydrofolate</name>
        <dbReference type="ChEBI" id="CHEBI:57457"/>
    </ligand>
</feature>
<feature type="binding site" evidence="1">
    <location>
        <begin position="231"/>
        <end position="236"/>
    </location>
    <ligand>
        <name>GTP</name>
        <dbReference type="ChEBI" id="CHEBI:37565"/>
    </ligand>
</feature>
<feature type="binding site" evidence="1">
    <location>
        <position position="231"/>
    </location>
    <ligand>
        <name>K(+)</name>
        <dbReference type="ChEBI" id="CHEBI:29103"/>
    </ligand>
</feature>
<feature type="binding site" evidence="1">
    <location>
        <position position="235"/>
    </location>
    <ligand>
        <name>Mg(2+)</name>
        <dbReference type="ChEBI" id="CHEBI:18420"/>
    </ligand>
</feature>
<feature type="binding site" evidence="1">
    <location>
        <begin position="250"/>
        <end position="256"/>
    </location>
    <ligand>
        <name>GTP</name>
        <dbReference type="ChEBI" id="CHEBI:37565"/>
    </ligand>
</feature>
<feature type="binding site" evidence="1">
    <location>
        <position position="250"/>
    </location>
    <ligand>
        <name>K(+)</name>
        <dbReference type="ChEBI" id="CHEBI:29103"/>
    </ligand>
</feature>
<feature type="binding site" evidence="1">
    <location>
        <position position="252"/>
    </location>
    <ligand>
        <name>K(+)</name>
        <dbReference type="ChEBI" id="CHEBI:29103"/>
    </ligand>
</feature>
<feature type="binding site" evidence="1">
    <location>
        <position position="255"/>
    </location>
    <ligand>
        <name>K(+)</name>
        <dbReference type="ChEBI" id="CHEBI:29103"/>
    </ligand>
</feature>
<feature type="binding site" evidence="1">
    <location>
        <position position="256"/>
    </location>
    <ligand>
        <name>Mg(2+)</name>
        <dbReference type="ChEBI" id="CHEBI:18420"/>
    </ligand>
</feature>
<feature type="binding site" evidence="1">
    <location>
        <begin position="275"/>
        <end position="278"/>
    </location>
    <ligand>
        <name>GTP</name>
        <dbReference type="ChEBI" id="CHEBI:37565"/>
    </ligand>
</feature>
<feature type="binding site" evidence="1">
    <location>
        <position position="459"/>
    </location>
    <ligand>
        <name>(6S)-5-formyl-5,6,7,8-tetrahydrofolate</name>
        <dbReference type="ChEBI" id="CHEBI:57457"/>
    </ligand>
</feature>
<name>MNME_STAA9</name>
<reference key="1">
    <citation type="submission" date="2007-05" db="EMBL/GenBank/DDBJ databases">
        <title>Complete sequence of chromosome of Staphylococcus aureus subsp. aureus JH9.</title>
        <authorList>
            <consortium name="US DOE Joint Genome Institute"/>
            <person name="Copeland A."/>
            <person name="Lucas S."/>
            <person name="Lapidus A."/>
            <person name="Barry K."/>
            <person name="Detter J.C."/>
            <person name="Glavina del Rio T."/>
            <person name="Hammon N."/>
            <person name="Israni S."/>
            <person name="Pitluck S."/>
            <person name="Chain P."/>
            <person name="Malfatti S."/>
            <person name="Shin M."/>
            <person name="Vergez L."/>
            <person name="Schmutz J."/>
            <person name="Larimer F."/>
            <person name="Land M."/>
            <person name="Hauser L."/>
            <person name="Kyrpides N."/>
            <person name="Kim E."/>
            <person name="Tomasz A."/>
            <person name="Richardson P."/>
        </authorList>
    </citation>
    <scope>NUCLEOTIDE SEQUENCE [LARGE SCALE GENOMIC DNA]</scope>
    <source>
        <strain>JH9</strain>
    </source>
</reference>
<evidence type="ECO:0000255" key="1">
    <source>
        <dbReference type="HAMAP-Rule" id="MF_00379"/>
    </source>
</evidence>
<protein>
    <recommendedName>
        <fullName evidence="1">tRNA modification GTPase MnmE</fullName>
        <ecNumber evidence="1">3.6.-.-</ecNumber>
    </recommendedName>
</protein>